<dbReference type="EMBL" id="DQ213267">
    <property type="protein sequence ID" value="ACH43690.1"/>
    <property type="molecule type" value="mRNA"/>
</dbReference>
<dbReference type="RefSeq" id="NP_001157810.1">
    <property type="nucleotide sequence ID" value="NM_001164338.1"/>
</dbReference>
<dbReference type="SMR" id="B5FXC9"/>
<dbReference type="FunCoup" id="B5FXC9">
    <property type="interactions" value="75"/>
</dbReference>
<dbReference type="STRING" id="59729.ENSTGUP00000018776"/>
<dbReference type="Ensembl" id="ENSTGUT00000028684.1">
    <property type="protein sequence ID" value="ENSTGUP00000018776.1"/>
    <property type="gene ID" value="ENSTGUG00000024656.1"/>
</dbReference>
<dbReference type="GeneID" id="100189998"/>
<dbReference type="KEGG" id="tgu:100189998"/>
<dbReference type="CTD" id="56935"/>
<dbReference type="GeneTree" id="ENSGT00390000015987"/>
<dbReference type="HOGENOM" id="CLU_209950_0_0_1"/>
<dbReference type="InParanoid" id="B5FXC9"/>
<dbReference type="OMA" id="FFIYANT"/>
<dbReference type="TreeFam" id="TF324415"/>
<dbReference type="Proteomes" id="UP000007754">
    <property type="component" value="Chromosome 1"/>
</dbReference>
<dbReference type="GO" id="GO:0016020">
    <property type="term" value="C:membrane"/>
    <property type="evidence" value="ECO:0007669"/>
    <property type="project" value="UniProtKB-SubCell"/>
</dbReference>
<dbReference type="InterPro" id="IPR027960">
    <property type="entry name" value="DUF4519"/>
</dbReference>
<dbReference type="PANTHER" id="PTHR34644">
    <property type="entry name" value="SINGLE-PASS MEMBRANE AND COILED-COIL DOMAIN-CONTAINING PROTEIN 4"/>
    <property type="match status" value="1"/>
</dbReference>
<dbReference type="PANTHER" id="PTHR34644:SF2">
    <property type="entry name" value="SINGLE-PASS MEMBRANE AND COILED-COIL DOMAIN-CONTAINING PROTEIN 4"/>
    <property type="match status" value="1"/>
</dbReference>
<dbReference type="Pfam" id="PF15012">
    <property type="entry name" value="DUF4519"/>
    <property type="match status" value="1"/>
</dbReference>
<name>SMCO4_TAEGU</name>
<protein>
    <recommendedName>
        <fullName>Single-pass membrane and coiled-coil domain-containing protein 4</fullName>
    </recommendedName>
</protein>
<accession>B5FXC9</accession>
<sequence>MRQLRGKPKKETSKDKKERKQAMQEARQQITTVVLPTLAVVVLLIVVFVYVATRPNTTE</sequence>
<proteinExistence type="inferred from homology"/>
<feature type="chain" id="PRO_0000365549" description="Single-pass membrane and coiled-coil domain-containing protein 4">
    <location>
        <begin position="1"/>
        <end position="59"/>
    </location>
</feature>
<feature type="transmembrane region" description="Helical" evidence="1">
    <location>
        <begin position="32"/>
        <end position="52"/>
    </location>
</feature>
<feature type="region of interest" description="Disordered" evidence="2">
    <location>
        <begin position="1"/>
        <end position="25"/>
    </location>
</feature>
<feature type="coiled-coil region" evidence="1">
    <location>
        <begin position="9"/>
        <end position="31"/>
    </location>
</feature>
<feature type="compositionally biased region" description="Basic and acidic residues" evidence="2">
    <location>
        <begin position="9"/>
        <end position="22"/>
    </location>
</feature>
<reference key="1">
    <citation type="journal article" date="2006" name="Proc. Natl. Acad. Sci. U.S.A.">
        <title>A molecular neuroethological approach for identifying and characterizing a cascade of behaviorally regulated genes.</title>
        <authorList>
            <person name="Wada K."/>
            <person name="Howard J.T."/>
            <person name="McConnell P."/>
            <person name="Whitney O."/>
            <person name="Lints T."/>
            <person name="Rivas M.V."/>
            <person name="Horita H."/>
            <person name="Patterson M.A."/>
            <person name="White S.A."/>
            <person name="Scharff C."/>
            <person name="Haesler S."/>
            <person name="Zhao S."/>
            <person name="Sakaguchi H."/>
            <person name="Hagiwara M."/>
            <person name="Shiraki T."/>
            <person name="Hirozane-Kishikawa T."/>
            <person name="Skene P."/>
            <person name="Hayashizaki Y."/>
            <person name="Carninci P."/>
            <person name="Jarvis E.D."/>
        </authorList>
    </citation>
    <scope>NUCLEOTIDE SEQUENCE [LARGE SCALE MRNA]</scope>
    <source>
        <tissue>Brain</tissue>
    </source>
</reference>
<gene>
    <name type="primary">smco4</name>
</gene>
<organism>
    <name type="scientific">Taeniopygia guttata</name>
    <name type="common">Zebra finch</name>
    <name type="synonym">Poephila guttata</name>
    <dbReference type="NCBI Taxonomy" id="59729"/>
    <lineage>
        <taxon>Eukaryota</taxon>
        <taxon>Metazoa</taxon>
        <taxon>Chordata</taxon>
        <taxon>Craniata</taxon>
        <taxon>Vertebrata</taxon>
        <taxon>Euteleostomi</taxon>
        <taxon>Archelosauria</taxon>
        <taxon>Archosauria</taxon>
        <taxon>Dinosauria</taxon>
        <taxon>Saurischia</taxon>
        <taxon>Theropoda</taxon>
        <taxon>Coelurosauria</taxon>
        <taxon>Aves</taxon>
        <taxon>Neognathae</taxon>
        <taxon>Neoaves</taxon>
        <taxon>Telluraves</taxon>
        <taxon>Australaves</taxon>
        <taxon>Passeriformes</taxon>
        <taxon>Passeroidea</taxon>
        <taxon>Estrildidae</taxon>
        <taxon>Estrildinae</taxon>
        <taxon>Taeniopygia</taxon>
    </lineage>
</organism>
<keyword id="KW-0175">Coiled coil</keyword>
<keyword id="KW-0472">Membrane</keyword>
<keyword id="KW-1185">Reference proteome</keyword>
<keyword id="KW-0812">Transmembrane</keyword>
<keyword id="KW-1133">Transmembrane helix</keyword>
<evidence type="ECO:0000255" key="1"/>
<evidence type="ECO:0000256" key="2">
    <source>
        <dbReference type="SAM" id="MobiDB-lite"/>
    </source>
</evidence>
<evidence type="ECO:0000305" key="3"/>
<comment type="subcellular location">
    <subcellularLocation>
        <location evidence="3">Membrane</location>
        <topology evidence="3">Single-pass membrane protein</topology>
    </subcellularLocation>
</comment>
<comment type="similarity">
    <text evidence="3">Belongs to the SMCO4 family.</text>
</comment>